<feature type="signal peptide" evidence="1">
    <location>
        <begin position="1"/>
        <end position="22"/>
    </location>
</feature>
<feature type="chain" id="PRO_5000314049" description="Glucans biosynthesis protein G">
    <location>
        <begin position="23"/>
        <end position="511"/>
    </location>
</feature>
<comment type="function">
    <text evidence="1">Involved in the biosynthesis of osmoregulated periplasmic glucans (OPGs).</text>
</comment>
<comment type="pathway">
    <text evidence="1">Glycan metabolism; osmoregulated periplasmic glucan (OPG) biosynthesis.</text>
</comment>
<comment type="subcellular location">
    <subcellularLocation>
        <location evidence="1">Periplasm</location>
    </subcellularLocation>
</comment>
<comment type="similarity">
    <text evidence="1">Belongs to the OpgD/OpgG family.</text>
</comment>
<sequence>MMKMRWLSAAVMLTLYTSSSWAFSIDDVAKQAQSLAGKGYEAPKSNLPSVFRDMKYADYQQIQFNHDKAYWNNLKTPFKLEFYHQGMYFDTPVKINEVTATAVKRIKYSPDYFTFGDVQHDKDTVKDLGFAGFKVLYPINSKDKNDEIVSMLGASYFRVIGAGQVYGLSARGLAIDTALPSGEEFPRFKEFWIERPKPTDKRLTIYALLDSPRATGAYKFVVMPGRDTVVDVQSKIYLRDKVGKLGVAPLTSMFLFGPNQPSPANNYRPELHDSNGLSIHAGNGEWIWRPLNNPKHLAVSSFSMENPQGFGLLQRGRDFSRFEDLDDRYDLRPSAWVTPKGEWGKGSVELVEIPTNDETNDNIVAYWTPDQLPEPGKEMNFKYTITFSRDEDKLHAPDNAWVQQTRRSTGDVKQSNLIRQPDGTIAFVVDFTGAEMKKLPEDTPVTAQTSIGDNGEIVESTVRYNPVTKGWRLVMRVKVKDAKKTTEMRAALVNADQTLSETWSYQLPANE</sequence>
<proteinExistence type="inferred from homology"/>
<evidence type="ECO:0000255" key="1">
    <source>
        <dbReference type="HAMAP-Rule" id="MF_01069"/>
    </source>
</evidence>
<name>OPGG_ECOLC</name>
<keyword id="KW-0574">Periplasm</keyword>
<keyword id="KW-0732">Signal</keyword>
<dbReference type="EMBL" id="CP000946">
    <property type="protein sequence ID" value="ACA78182.1"/>
    <property type="molecule type" value="Genomic_DNA"/>
</dbReference>
<dbReference type="RefSeq" id="WP_001300662.1">
    <property type="nucleotide sequence ID" value="NZ_MTFT01000032.1"/>
</dbReference>
<dbReference type="SMR" id="B1IV53"/>
<dbReference type="GeneID" id="93776366"/>
<dbReference type="KEGG" id="ecl:EcolC_2551"/>
<dbReference type="HOGENOM" id="CLU_023403_2_0_6"/>
<dbReference type="UniPathway" id="UPA00637"/>
<dbReference type="GO" id="GO:0030288">
    <property type="term" value="C:outer membrane-bounded periplasmic space"/>
    <property type="evidence" value="ECO:0007669"/>
    <property type="project" value="TreeGrafter"/>
</dbReference>
<dbReference type="GO" id="GO:0030246">
    <property type="term" value="F:carbohydrate binding"/>
    <property type="evidence" value="ECO:0007669"/>
    <property type="project" value="InterPro"/>
</dbReference>
<dbReference type="GO" id="GO:0003824">
    <property type="term" value="F:catalytic activity"/>
    <property type="evidence" value="ECO:0007669"/>
    <property type="project" value="InterPro"/>
</dbReference>
<dbReference type="GO" id="GO:0051274">
    <property type="term" value="P:beta-glucan biosynthetic process"/>
    <property type="evidence" value="ECO:0007669"/>
    <property type="project" value="TreeGrafter"/>
</dbReference>
<dbReference type="FunFam" id="2.60.40.10:FF:000294">
    <property type="entry name" value="Glucans biosynthesis protein G"/>
    <property type="match status" value="1"/>
</dbReference>
<dbReference type="FunFam" id="2.70.98.10:FF:000001">
    <property type="entry name" value="Glucans biosynthesis protein G"/>
    <property type="match status" value="1"/>
</dbReference>
<dbReference type="Gene3D" id="2.70.98.10">
    <property type="match status" value="1"/>
</dbReference>
<dbReference type="Gene3D" id="2.60.40.10">
    <property type="entry name" value="Immunoglobulins"/>
    <property type="match status" value="1"/>
</dbReference>
<dbReference type="HAMAP" id="MF_01069">
    <property type="entry name" value="MdoG_OpgG"/>
    <property type="match status" value="1"/>
</dbReference>
<dbReference type="InterPro" id="IPR011013">
    <property type="entry name" value="Gal_mutarotase_sf_dom"/>
</dbReference>
<dbReference type="InterPro" id="IPR014718">
    <property type="entry name" value="GH-type_carb-bd"/>
</dbReference>
<dbReference type="InterPro" id="IPR014438">
    <property type="entry name" value="Glucan_biosyn_MdoG/MdoD"/>
</dbReference>
<dbReference type="InterPro" id="IPR007444">
    <property type="entry name" value="Glucan_biosyn_MdoG_C"/>
</dbReference>
<dbReference type="InterPro" id="IPR013783">
    <property type="entry name" value="Ig-like_fold"/>
</dbReference>
<dbReference type="InterPro" id="IPR014756">
    <property type="entry name" value="Ig_E-set"/>
</dbReference>
<dbReference type="InterPro" id="IPR023704">
    <property type="entry name" value="MdoG_OpgG"/>
</dbReference>
<dbReference type="PANTHER" id="PTHR30504">
    <property type="entry name" value="GLUCANS BIOSYNTHESIS PROTEIN"/>
    <property type="match status" value="1"/>
</dbReference>
<dbReference type="PANTHER" id="PTHR30504:SF4">
    <property type="entry name" value="GLUCANS BIOSYNTHESIS PROTEIN G"/>
    <property type="match status" value="1"/>
</dbReference>
<dbReference type="Pfam" id="PF04349">
    <property type="entry name" value="MdoG"/>
    <property type="match status" value="1"/>
</dbReference>
<dbReference type="PIRSF" id="PIRSF006281">
    <property type="entry name" value="MdoG"/>
    <property type="match status" value="1"/>
</dbReference>
<dbReference type="SUPFAM" id="SSF81296">
    <property type="entry name" value="E set domains"/>
    <property type="match status" value="1"/>
</dbReference>
<dbReference type="SUPFAM" id="SSF74650">
    <property type="entry name" value="Galactose mutarotase-like"/>
    <property type="match status" value="1"/>
</dbReference>
<accession>B1IV53</accession>
<gene>
    <name evidence="1" type="primary">mdoG</name>
    <name evidence="1" type="synonym">opgG</name>
    <name type="ordered locus">EcolC_2551</name>
</gene>
<protein>
    <recommendedName>
        <fullName evidence="1">Glucans biosynthesis protein G</fullName>
    </recommendedName>
</protein>
<reference key="1">
    <citation type="submission" date="2008-02" db="EMBL/GenBank/DDBJ databases">
        <title>Complete sequence of Escherichia coli C str. ATCC 8739.</title>
        <authorList>
            <person name="Copeland A."/>
            <person name="Lucas S."/>
            <person name="Lapidus A."/>
            <person name="Glavina del Rio T."/>
            <person name="Dalin E."/>
            <person name="Tice H."/>
            <person name="Bruce D."/>
            <person name="Goodwin L."/>
            <person name="Pitluck S."/>
            <person name="Kiss H."/>
            <person name="Brettin T."/>
            <person name="Detter J.C."/>
            <person name="Han C."/>
            <person name="Kuske C.R."/>
            <person name="Schmutz J."/>
            <person name="Larimer F."/>
            <person name="Land M."/>
            <person name="Hauser L."/>
            <person name="Kyrpides N."/>
            <person name="Mikhailova N."/>
            <person name="Ingram L."/>
            <person name="Richardson P."/>
        </authorList>
    </citation>
    <scope>NUCLEOTIDE SEQUENCE [LARGE SCALE GENOMIC DNA]</scope>
    <source>
        <strain>ATCC 8739 / DSM 1576 / NBRC 3972 / NCIMB 8545 / WDCM 00012 / Crooks</strain>
    </source>
</reference>
<organism>
    <name type="scientific">Escherichia coli (strain ATCC 8739 / DSM 1576 / NBRC 3972 / NCIMB 8545 / WDCM 00012 / Crooks)</name>
    <dbReference type="NCBI Taxonomy" id="481805"/>
    <lineage>
        <taxon>Bacteria</taxon>
        <taxon>Pseudomonadati</taxon>
        <taxon>Pseudomonadota</taxon>
        <taxon>Gammaproteobacteria</taxon>
        <taxon>Enterobacterales</taxon>
        <taxon>Enterobacteriaceae</taxon>
        <taxon>Escherichia</taxon>
    </lineage>
</organism>